<proteinExistence type="inferred from homology"/>
<sequence>MTQTRQQLGKARRWIIKIGSALLTNEGRGLDHEALAGWAEQIARLRASGREVVLVSSGAVAEGMSRLGWTTRPHALHELQAAAAVGQMGLVQAYESIFQRHGLRAAQVLLTHDDLSNRRRYLNARSTLRTLLALGVIPVVNENDTVATDEIRFGDNDTLAALVGNLTEAQVLVILTDQKGLFDRDPRAHADAQLVSEGLAMDPELLKLAAPTFGQLGRGGMATKLHAAARAARSGAYTLIASGREPRVLERIAEGEQIGTLLCPDKEPLAARKQWIAGQLIAKGELILDTGATKVLREAGRSLLPVGVTHVKGEFSRGDVVTCVDPDGRPVARGLVNYSADEARRIMKHRADEIEGILGYVDEPELIHRDNLVLL</sequence>
<reference key="1">
    <citation type="journal article" date="2011" name="Stand. Genomic Sci.">
        <title>Complete genome sequence of 'Thioalkalivibrio sulfidophilus' HL-EbGr7.</title>
        <authorList>
            <person name="Muyzer G."/>
            <person name="Sorokin D.Y."/>
            <person name="Mavromatis K."/>
            <person name="Lapidus A."/>
            <person name="Clum A."/>
            <person name="Ivanova N."/>
            <person name="Pati A."/>
            <person name="d'Haeseleer P."/>
            <person name="Woyke T."/>
            <person name="Kyrpides N.C."/>
        </authorList>
    </citation>
    <scope>NUCLEOTIDE SEQUENCE [LARGE SCALE GENOMIC DNA]</scope>
    <source>
        <strain>HL-EbGR7</strain>
    </source>
</reference>
<protein>
    <recommendedName>
        <fullName evidence="1">Glutamate 5-kinase</fullName>
        <ecNumber evidence="1">2.7.2.11</ecNumber>
    </recommendedName>
    <alternativeName>
        <fullName evidence="1">Gamma-glutamyl kinase</fullName>
        <shortName evidence="1">GK</shortName>
    </alternativeName>
</protein>
<organism>
    <name type="scientific">Thioalkalivibrio sulfidiphilus (strain HL-EbGR7)</name>
    <dbReference type="NCBI Taxonomy" id="396588"/>
    <lineage>
        <taxon>Bacteria</taxon>
        <taxon>Pseudomonadati</taxon>
        <taxon>Pseudomonadota</taxon>
        <taxon>Gammaproteobacteria</taxon>
        <taxon>Chromatiales</taxon>
        <taxon>Ectothiorhodospiraceae</taxon>
        <taxon>Thioalkalivibrio</taxon>
    </lineage>
</organism>
<gene>
    <name evidence="1" type="primary">proB</name>
    <name type="ordered locus">Tgr7_3209</name>
</gene>
<evidence type="ECO:0000255" key="1">
    <source>
        <dbReference type="HAMAP-Rule" id="MF_00456"/>
    </source>
</evidence>
<keyword id="KW-0028">Amino-acid biosynthesis</keyword>
<keyword id="KW-0067">ATP-binding</keyword>
<keyword id="KW-0963">Cytoplasm</keyword>
<keyword id="KW-0418">Kinase</keyword>
<keyword id="KW-0547">Nucleotide-binding</keyword>
<keyword id="KW-0641">Proline biosynthesis</keyword>
<keyword id="KW-1185">Reference proteome</keyword>
<keyword id="KW-0808">Transferase</keyword>
<comment type="function">
    <text evidence="1">Catalyzes the transfer of a phosphate group to glutamate to form L-glutamate 5-phosphate.</text>
</comment>
<comment type="catalytic activity">
    <reaction evidence="1">
        <text>L-glutamate + ATP = L-glutamyl 5-phosphate + ADP</text>
        <dbReference type="Rhea" id="RHEA:14877"/>
        <dbReference type="ChEBI" id="CHEBI:29985"/>
        <dbReference type="ChEBI" id="CHEBI:30616"/>
        <dbReference type="ChEBI" id="CHEBI:58274"/>
        <dbReference type="ChEBI" id="CHEBI:456216"/>
        <dbReference type="EC" id="2.7.2.11"/>
    </reaction>
</comment>
<comment type="pathway">
    <text evidence="1">Amino-acid biosynthesis; L-proline biosynthesis; L-glutamate 5-semialdehyde from L-glutamate: step 1/2.</text>
</comment>
<comment type="subcellular location">
    <subcellularLocation>
        <location evidence="1">Cytoplasm</location>
    </subcellularLocation>
</comment>
<comment type="similarity">
    <text evidence="1">Belongs to the glutamate 5-kinase family.</text>
</comment>
<accession>B8GQQ4</accession>
<feature type="chain" id="PRO_1000193713" description="Glutamate 5-kinase">
    <location>
        <begin position="1"/>
        <end position="375"/>
    </location>
</feature>
<feature type="domain" description="PUA" evidence="1">
    <location>
        <begin position="283"/>
        <end position="361"/>
    </location>
</feature>
<feature type="binding site" evidence="1">
    <location>
        <position position="17"/>
    </location>
    <ligand>
        <name>ATP</name>
        <dbReference type="ChEBI" id="CHEBI:30616"/>
    </ligand>
</feature>
<feature type="binding site" evidence="1">
    <location>
        <position position="57"/>
    </location>
    <ligand>
        <name>substrate</name>
    </ligand>
</feature>
<feature type="binding site" evidence="1">
    <location>
        <position position="144"/>
    </location>
    <ligand>
        <name>substrate</name>
    </ligand>
</feature>
<feature type="binding site" evidence="1">
    <location>
        <position position="156"/>
    </location>
    <ligand>
        <name>substrate</name>
    </ligand>
</feature>
<feature type="binding site" evidence="1">
    <location>
        <begin position="176"/>
        <end position="177"/>
    </location>
    <ligand>
        <name>ATP</name>
        <dbReference type="ChEBI" id="CHEBI:30616"/>
    </ligand>
</feature>
<dbReference type="EC" id="2.7.2.11" evidence="1"/>
<dbReference type="EMBL" id="CP001339">
    <property type="protein sequence ID" value="ACL74278.1"/>
    <property type="molecule type" value="Genomic_DNA"/>
</dbReference>
<dbReference type="RefSeq" id="WP_012639740.1">
    <property type="nucleotide sequence ID" value="NC_011901.1"/>
</dbReference>
<dbReference type="SMR" id="B8GQQ4"/>
<dbReference type="STRING" id="396588.Tgr7_3209"/>
<dbReference type="KEGG" id="tgr:Tgr7_3209"/>
<dbReference type="eggNOG" id="COG0263">
    <property type="taxonomic scope" value="Bacteria"/>
</dbReference>
<dbReference type="HOGENOM" id="CLU_025400_2_0_6"/>
<dbReference type="OrthoDB" id="9804434at2"/>
<dbReference type="UniPathway" id="UPA00098">
    <property type="reaction ID" value="UER00359"/>
</dbReference>
<dbReference type="Proteomes" id="UP000002383">
    <property type="component" value="Chromosome"/>
</dbReference>
<dbReference type="GO" id="GO:0005829">
    <property type="term" value="C:cytosol"/>
    <property type="evidence" value="ECO:0007669"/>
    <property type="project" value="TreeGrafter"/>
</dbReference>
<dbReference type="GO" id="GO:0005524">
    <property type="term" value="F:ATP binding"/>
    <property type="evidence" value="ECO:0007669"/>
    <property type="project" value="UniProtKB-KW"/>
</dbReference>
<dbReference type="GO" id="GO:0004349">
    <property type="term" value="F:glutamate 5-kinase activity"/>
    <property type="evidence" value="ECO:0007669"/>
    <property type="project" value="UniProtKB-UniRule"/>
</dbReference>
<dbReference type="GO" id="GO:0003723">
    <property type="term" value="F:RNA binding"/>
    <property type="evidence" value="ECO:0007669"/>
    <property type="project" value="InterPro"/>
</dbReference>
<dbReference type="GO" id="GO:0055129">
    <property type="term" value="P:L-proline biosynthetic process"/>
    <property type="evidence" value="ECO:0007669"/>
    <property type="project" value="UniProtKB-UniRule"/>
</dbReference>
<dbReference type="CDD" id="cd04242">
    <property type="entry name" value="AAK_G5K_ProB"/>
    <property type="match status" value="1"/>
</dbReference>
<dbReference type="CDD" id="cd21157">
    <property type="entry name" value="PUA_G5K"/>
    <property type="match status" value="1"/>
</dbReference>
<dbReference type="FunFam" id="2.30.130.10:FF:000007">
    <property type="entry name" value="Glutamate 5-kinase"/>
    <property type="match status" value="1"/>
</dbReference>
<dbReference type="FunFam" id="3.40.1160.10:FF:000018">
    <property type="entry name" value="Glutamate 5-kinase"/>
    <property type="match status" value="1"/>
</dbReference>
<dbReference type="Gene3D" id="3.40.1160.10">
    <property type="entry name" value="Acetylglutamate kinase-like"/>
    <property type="match status" value="2"/>
</dbReference>
<dbReference type="Gene3D" id="2.30.130.10">
    <property type="entry name" value="PUA domain"/>
    <property type="match status" value="1"/>
</dbReference>
<dbReference type="HAMAP" id="MF_00456">
    <property type="entry name" value="ProB"/>
    <property type="match status" value="1"/>
</dbReference>
<dbReference type="InterPro" id="IPR036393">
    <property type="entry name" value="AceGlu_kinase-like_sf"/>
</dbReference>
<dbReference type="InterPro" id="IPR001048">
    <property type="entry name" value="Asp/Glu/Uridylate_kinase"/>
</dbReference>
<dbReference type="InterPro" id="IPR041739">
    <property type="entry name" value="G5K_ProB"/>
</dbReference>
<dbReference type="InterPro" id="IPR001057">
    <property type="entry name" value="Glu/AcGlu_kinase"/>
</dbReference>
<dbReference type="InterPro" id="IPR011529">
    <property type="entry name" value="Glu_5kinase"/>
</dbReference>
<dbReference type="InterPro" id="IPR005715">
    <property type="entry name" value="Glu_5kinase/COase_Synthase"/>
</dbReference>
<dbReference type="InterPro" id="IPR019797">
    <property type="entry name" value="Glutamate_5-kinase_CS"/>
</dbReference>
<dbReference type="InterPro" id="IPR002478">
    <property type="entry name" value="PUA"/>
</dbReference>
<dbReference type="InterPro" id="IPR015947">
    <property type="entry name" value="PUA-like_sf"/>
</dbReference>
<dbReference type="InterPro" id="IPR036974">
    <property type="entry name" value="PUA_sf"/>
</dbReference>
<dbReference type="NCBIfam" id="TIGR01027">
    <property type="entry name" value="proB"/>
    <property type="match status" value="1"/>
</dbReference>
<dbReference type="PANTHER" id="PTHR43654">
    <property type="entry name" value="GLUTAMATE 5-KINASE"/>
    <property type="match status" value="1"/>
</dbReference>
<dbReference type="PANTHER" id="PTHR43654:SF1">
    <property type="entry name" value="ISOPENTENYL PHOSPHATE KINASE"/>
    <property type="match status" value="1"/>
</dbReference>
<dbReference type="Pfam" id="PF00696">
    <property type="entry name" value="AA_kinase"/>
    <property type="match status" value="1"/>
</dbReference>
<dbReference type="Pfam" id="PF01472">
    <property type="entry name" value="PUA"/>
    <property type="match status" value="1"/>
</dbReference>
<dbReference type="PIRSF" id="PIRSF000729">
    <property type="entry name" value="GK"/>
    <property type="match status" value="1"/>
</dbReference>
<dbReference type="PRINTS" id="PR00474">
    <property type="entry name" value="GLU5KINASE"/>
</dbReference>
<dbReference type="SMART" id="SM00359">
    <property type="entry name" value="PUA"/>
    <property type="match status" value="1"/>
</dbReference>
<dbReference type="SUPFAM" id="SSF53633">
    <property type="entry name" value="Carbamate kinase-like"/>
    <property type="match status" value="1"/>
</dbReference>
<dbReference type="SUPFAM" id="SSF88697">
    <property type="entry name" value="PUA domain-like"/>
    <property type="match status" value="1"/>
</dbReference>
<dbReference type="PROSITE" id="PS00902">
    <property type="entry name" value="GLUTAMATE_5_KINASE"/>
    <property type="match status" value="1"/>
</dbReference>
<dbReference type="PROSITE" id="PS50890">
    <property type="entry name" value="PUA"/>
    <property type="match status" value="1"/>
</dbReference>
<name>PROB_THISH</name>